<accession>B9IVX2</accession>
<feature type="chain" id="PRO_1000189128" description="Isoleucine--tRNA ligase">
    <location>
        <begin position="1"/>
        <end position="921"/>
    </location>
</feature>
<feature type="short sequence motif" description="'HIGH' region">
    <location>
        <begin position="57"/>
        <end position="67"/>
    </location>
</feature>
<feature type="short sequence motif" description="'KMSKS' region">
    <location>
        <begin position="593"/>
        <end position="597"/>
    </location>
</feature>
<feature type="binding site" evidence="1">
    <location>
        <position position="552"/>
    </location>
    <ligand>
        <name>L-isoleucyl-5'-AMP</name>
        <dbReference type="ChEBI" id="CHEBI:178002"/>
    </ligand>
</feature>
<feature type="binding site" evidence="1">
    <location>
        <position position="596"/>
    </location>
    <ligand>
        <name>ATP</name>
        <dbReference type="ChEBI" id="CHEBI:30616"/>
    </ligand>
</feature>
<feature type="binding site" evidence="1">
    <location>
        <position position="888"/>
    </location>
    <ligand>
        <name>Zn(2+)</name>
        <dbReference type="ChEBI" id="CHEBI:29105"/>
    </ligand>
</feature>
<feature type="binding site" evidence="1">
    <location>
        <position position="891"/>
    </location>
    <ligand>
        <name>Zn(2+)</name>
        <dbReference type="ChEBI" id="CHEBI:29105"/>
    </ligand>
</feature>
<feature type="binding site" evidence="1">
    <location>
        <position position="908"/>
    </location>
    <ligand>
        <name>Zn(2+)</name>
        <dbReference type="ChEBI" id="CHEBI:29105"/>
    </ligand>
</feature>
<feature type="binding site" evidence="1">
    <location>
        <position position="911"/>
    </location>
    <ligand>
        <name>Zn(2+)</name>
        <dbReference type="ChEBI" id="CHEBI:29105"/>
    </ligand>
</feature>
<organism>
    <name type="scientific">Bacillus cereus (strain Q1)</name>
    <dbReference type="NCBI Taxonomy" id="361100"/>
    <lineage>
        <taxon>Bacteria</taxon>
        <taxon>Bacillati</taxon>
        <taxon>Bacillota</taxon>
        <taxon>Bacilli</taxon>
        <taxon>Bacillales</taxon>
        <taxon>Bacillaceae</taxon>
        <taxon>Bacillus</taxon>
        <taxon>Bacillus cereus group</taxon>
    </lineage>
</organism>
<gene>
    <name evidence="1" type="primary">ileS</name>
    <name type="ordered locus">BCQ_3681</name>
</gene>
<comment type="function">
    <text evidence="1">Catalyzes the attachment of isoleucine to tRNA(Ile). As IleRS can inadvertently accommodate and process structurally similar amino acids such as valine, to avoid such errors it has two additional distinct tRNA(Ile)-dependent editing activities. One activity is designated as 'pretransfer' editing and involves the hydrolysis of activated Val-AMP. The other activity is designated 'posttransfer' editing and involves deacylation of mischarged Val-tRNA(Ile).</text>
</comment>
<comment type="catalytic activity">
    <reaction evidence="1">
        <text>tRNA(Ile) + L-isoleucine + ATP = L-isoleucyl-tRNA(Ile) + AMP + diphosphate</text>
        <dbReference type="Rhea" id="RHEA:11060"/>
        <dbReference type="Rhea" id="RHEA-COMP:9666"/>
        <dbReference type="Rhea" id="RHEA-COMP:9695"/>
        <dbReference type="ChEBI" id="CHEBI:30616"/>
        <dbReference type="ChEBI" id="CHEBI:33019"/>
        <dbReference type="ChEBI" id="CHEBI:58045"/>
        <dbReference type="ChEBI" id="CHEBI:78442"/>
        <dbReference type="ChEBI" id="CHEBI:78528"/>
        <dbReference type="ChEBI" id="CHEBI:456215"/>
        <dbReference type="EC" id="6.1.1.5"/>
    </reaction>
</comment>
<comment type="cofactor">
    <cofactor evidence="1">
        <name>Zn(2+)</name>
        <dbReference type="ChEBI" id="CHEBI:29105"/>
    </cofactor>
    <text evidence="1">Binds 1 zinc ion per subunit.</text>
</comment>
<comment type="subunit">
    <text evidence="1">Monomer.</text>
</comment>
<comment type="subcellular location">
    <subcellularLocation>
        <location evidence="1">Cytoplasm</location>
    </subcellularLocation>
</comment>
<comment type="domain">
    <text evidence="1">IleRS has two distinct active sites: one for aminoacylation and one for editing. The misactivated valine is translocated from the active site to the editing site, which sterically excludes the correctly activated isoleucine. The single editing site contains two valyl binding pockets, one specific for each substrate (Val-AMP or Val-tRNA(Ile)).</text>
</comment>
<comment type="similarity">
    <text evidence="1">Belongs to the class-I aminoacyl-tRNA synthetase family. IleS type 1 subfamily.</text>
</comment>
<keyword id="KW-0030">Aminoacyl-tRNA synthetase</keyword>
<keyword id="KW-0067">ATP-binding</keyword>
<keyword id="KW-0963">Cytoplasm</keyword>
<keyword id="KW-0436">Ligase</keyword>
<keyword id="KW-0479">Metal-binding</keyword>
<keyword id="KW-0547">Nucleotide-binding</keyword>
<keyword id="KW-0648">Protein biosynthesis</keyword>
<keyword id="KW-0862">Zinc</keyword>
<reference key="1">
    <citation type="journal article" date="2009" name="J. Bacteriol.">
        <title>Complete genome sequence of the extremophilic Bacillus cereus strain Q1 with industrial applications.</title>
        <authorList>
            <person name="Xiong Z."/>
            <person name="Jiang Y."/>
            <person name="Qi D."/>
            <person name="Lu H."/>
            <person name="Yang F."/>
            <person name="Yang J."/>
            <person name="Chen L."/>
            <person name="Sun L."/>
            <person name="Xu X."/>
            <person name="Xue Y."/>
            <person name="Zhu Y."/>
            <person name="Jin Q."/>
        </authorList>
    </citation>
    <scope>NUCLEOTIDE SEQUENCE [LARGE SCALE GENOMIC DNA]</scope>
    <source>
        <strain>Q1</strain>
    </source>
</reference>
<protein>
    <recommendedName>
        <fullName evidence="1">Isoleucine--tRNA ligase</fullName>
        <ecNumber evidence="1">6.1.1.5</ecNumber>
    </recommendedName>
    <alternativeName>
        <fullName evidence="1">Isoleucyl-tRNA synthetase</fullName>
        <shortName evidence="1">IleRS</shortName>
    </alternativeName>
</protein>
<sequence>MEYKNTLLMPKTEFPMRGNLPKREPAMQEKWAEMNIYEKVQEHTKGRPLFVLHDGPPYANGDIHMGHALNKVLKDFIVRYKSMTGFCAPYVPGWDTHGLPIEQALTNKGVKRKEMTVAEFRKLCAEYAYEQVERQREQFKRLGVRADWDNPYITLEPAYEAQQIKVFGDMAKKGYIYKGQKPVYWSPTSESALAEAEIEYQDKKSASIYVAFPVKDGKNVLEGDEKYIIWTTTPWTLPANLGISVHPELEYAIVKVNGEKYIIASELFETVAKTLEWENAEVVKTVKGSELEYTVAKHPFYDRDSLVMLGDHVTTDAGTGCVHTAPGHGEDDFIVGKKYGLEVLCPVDDKGVLTEEAPGFEGLFYDKANKPITEKLEEVGALLKLTFITHSYPHDWRTKKPIIFRATAQWFASIEAFRKELLEAVAETKWVPAWGETRLHNMVRDRGDWCISRQRAWGVPIPVFYAENGDPIITDETINHVADLFREHGSNVWFEREAKDLLPEGFTHSGSPNGEFRKETDIMDVWFDSGSSHQAVLEERDDLQRPADLYLEGSDQYRGWFNSSLSTAVAVTGKAPYKGVLSHGFVLDGEGRKMSKSIGNIVVPKKIMDQLGGDILRLWVSSVDYQSDVRISDDILKQVAEVYRKIRNTFRFLLGNLDDFKPSENTVAVAELREVDRYMLVKLNDLITKVKEAYETYDFAAVYHAIHNFCTIDLSSFYLDFAKDILYIEGANHEDRRAIQTVLYDVLVALTKLVTPILPHTADEVWPYIPGVTEESVQLTDMPEAVQLDGAEALKTKWDAFMTLRDDVLKALEVARNEKVIGKSLNASITLYPTAEMKAMLESINEDLKQLFIVSEYKLGGMMEEAPADAPKYEHTAVVVVQATGETCERCWVVSETIGKDAEHETLCERCATVVKENYVK</sequence>
<name>SYI_BACCQ</name>
<proteinExistence type="inferred from homology"/>
<evidence type="ECO:0000255" key="1">
    <source>
        <dbReference type="HAMAP-Rule" id="MF_02002"/>
    </source>
</evidence>
<dbReference type="EC" id="6.1.1.5" evidence="1"/>
<dbReference type="EMBL" id="CP000227">
    <property type="protein sequence ID" value="ACM14109.1"/>
    <property type="molecule type" value="Genomic_DNA"/>
</dbReference>
<dbReference type="SMR" id="B9IVX2"/>
<dbReference type="KEGG" id="bcq:BCQ_3681"/>
<dbReference type="HOGENOM" id="CLU_001493_7_2_9"/>
<dbReference type="Proteomes" id="UP000000441">
    <property type="component" value="Chromosome"/>
</dbReference>
<dbReference type="GO" id="GO:0005829">
    <property type="term" value="C:cytosol"/>
    <property type="evidence" value="ECO:0007669"/>
    <property type="project" value="TreeGrafter"/>
</dbReference>
<dbReference type="GO" id="GO:0002161">
    <property type="term" value="F:aminoacyl-tRNA deacylase activity"/>
    <property type="evidence" value="ECO:0007669"/>
    <property type="project" value="InterPro"/>
</dbReference>
<dbReference type="GO" id="GO:0005524">
    <property type="term" value="F:ATP binding"/>
    <property type="evidence" value="ECO:0007669"/>
    <property type="project" value="UniProtKB-UniRule"/>
</dbReference>
<dbReference type="GO" id="GO:0004822">
    <property type="term" value="F:isoleucine-tRNA ligase activity"/>
    <property type="evidence" value="ECO:0007669"/>
    <property type="project" value="UniProtKB-UniRule"/>
</dbReference>
<dbReference type="GO" id="GO:0000049">
    <property type="term" value="F:tRNA binding"/>
    <property type="evidence" value="ECO:0007669"/>
    <property type="project" value="InterPro"/>
</dbReference>
<dbReference type="GO" id="GO:0008270">
    <property type="term" value="F:zinc ion binding"/>
    <property type="evidence" value="ECO:0007669"/>
    <property type="project" value="UniProtKB-UniRule"/>
</dbReference>
<dbReference type="GO" id="GO:0006428">
    <property type="term" value="P:isoleucyl-tRNA aminoacylation"/>
    <property type="evidence" value="ECO:0007669"/>
    <property type="project" value="UniProtKB-UniRule"/>
</dbReference>
<dbReference type="CDD" id="cd07960">
    <property type="entry name" value="Anticodon_Ia_Ile_BEm"/>
    <property type="match status" value="1"/>
</dbReference>
<dbReference type="CDD" id="cd00818">
    <property type="entry name" value="IleRS_core"/>
    <property type="match status" value="1"/>
</dbReference>
<dbReference type="FunFam" id="1.10.10.830:FF:000001">
    <property type="entry name" value="Isoleucine--tRNA ligase"/>
    <property type="match status" value="1"/>
</dbReference>
<dbReference type="FunFam" id="1.10.730.20:FF:000001">
    <property type="entry name" value="Isoleucine--tRNA ligase"/>
    <property type="match status" value="1"/>
</dbReference>
<dbReference type="FunFam" id="3.40.50.620:FF:000152">
    <property type="entry name" value="Isoleucine--tRNA ligase"/>
    <property type="match status" value="1"/>
</dbReference>
<dbReference type="FunFam" id="3.90.740.10:FF:000006">
    <property type="entry name" value="Isoleucine--tRNA ligase"/>
    <property type="match status" value="1"/>
</dbReference>
<dbReference type="Gene3D" id="1.10.730.20">
    <property type="match status" value="1"/>
</dbReference>
<dbReference type="Gene3D" id="3.40.50.620">
    <property type="entry name" value="HUPs"/>
    <property type="match status" value="2"/>
</dbReference>
<dbReference type="Gene3D" id="1.10.10.830">
    <property type="entry name" value="Ile-tRNA synthetase CP2 domain-like"/>
    <property type="match status" value="1"/>
</dbReference>
<dbReference type="Gene3D" id="3.90.740.10">
    <property type="entry name" value="Valyl/Leucyl/Isoleucyl-tRNA synthetase, editing domain"/>
    <property type="match status" value="1"/>
</dbReference>
<dbReference type="HAMAP" id="MF_02002">
    <property type="entry name" value="Ile_tRNA_synth_type1"/>
    <property type="match status" value="1"/>
</dbReference>
<dbReference type="InterPro" id="IPR001412">
    <property type="entry name" value="aa-tRNA-synth_I_CS"/>
</dbReference>
<dbReference type="InterPro" id="IPR002300">
    <property type="entry name" value="aa-tRNA-synth_Ia"/>
</dbReference>
<dbReference type="InterPro" id="IPR033708">
    <property type="entry name" value="Anticodon_Ile_BEm"/>
</dbReference>
<dbReference type="InterPro" id="IPR002301">
    <property type="entry name" value="Ile-tRNA-ligase"/>
</dbReference>
<dbReference type="InterPro" id="IPR023585">
    <property type="entry name" value="Ile-tRNA-ligase_type1"/>
</dbReference>
<dbReference type="InterPro" id="IPR050081">
    <property type="entry name" value="Ile-tRNA_ligase"/>
</dbReference>
<dbReference type="InterPro" id="IPR013155">
    <property type="entry name" value="M/V/L/I-tRNA-synth_anticd-bd"/>
</dbReference>
<dbReference type="InterPro" id="IPR014729">
    <property type="entry name" value="Rossmann-like_a/b/a_fold"/>
</dbReference>
<dbReference type="InterPro" id="IPR009080">
    <property type="entry name" value="tRNAsynth_Ia_anticodon-bd"/>
</dbReference>
<dbReference type="InterPro" id="IPR009008">
    <property type="entry name" value="Val/Leu/Ile-tRNA-synth_edit"/>
</dbReference>
<dbReference type="InterPro" id="IPR010663">
    <property type="entry name" value="Znf_FPG/IleRS"/>
</dbReference>
<dbReference type="NCBIfam" id="TIGR00392">
    <property type="entry name" value="ileS"/>
    <property type="match status" value="1"/>
</dbReference>
<dbReference type="PANTHER" id="PTHR42765:SF1">
    <property type="entry name" value="ISOLEUCINE--TRNA LIGASE, MITOCHONDRIAL"/>
    <property type="match status" value="1"/>
</dbReference>
<dbReference type="PANTHER" id="PTHR42765">
    <property type="entry name" value="SOLEUCYL-TRNA SYNTHETASE"/>
    <property type="match status" value="1"/>
</dbReference>
<dbReference type="Pfam" id="PF08264">
    <property type="entry name" value="Anticodon_1"/>
    <property type="match status" value="1"/>
</dbReference>
<dbReference type="Pfam" id="PF00133">
    <property type="entry name" value="tRNA-synt_1"/>
    <property type="match status" value="1"/>
</dbReference>
<dbReference type="Pfam" id="PF06827">
    <property type="entry name" value="zf-FPG_IleRS"/>
    <property type="match status" value="1"/>
</dbReference>
<dbReference type="PRINTS" id="PR00984">
    <property type="entry name" value="TRNASYNTHILE"/>
</dbReference>
<dbReference type="SUPFAM" id="SSF47323">
    <property type="entry name" value="Anticodon-binding domain of a subclass of class I aminoacyl-tRNA synthetases"/>
    <property type="match status" value="1"/>
</dbReference>
<dbReference type="SUPFAM" id="SSF52374">
    <property type="entry name" value="Nucleotidylyl transferase"/>
    <property type="match status" value="1"/>
</dbReference>
<dbReference type="SUPFAM" id="SSF50677">
    <property type="entry name" value="ValRS/IleRS/LeuRS editing domain"/>
    <property type="match status" value="1"/>
</dbReference>
<dbReference type="PROSITE" id="PS00178">
    <property type="entry name" value="AA_TRNA_LIGASE_I"/>
    <property type="match status" value="1"/>
</dbReference>